<feature type="chain" id="PRO_1000134201" description="ATP synthase gamma chain">
    <location>
        <begin position="1"/>
        <end position="287"/>
    </location>
</feature>
<evidence type="ECO:0000255" key="1">
    <source>
        <dbReference type="HAMAP-Rule" id="MF_00815"/>
    </source>
</evidence>
<dbReference type="EMBL" id="AM933173">
    <property type="protein sequence ID" value="CAR39356.1"/>
    <property type="molecule type" value="Genomic_DNA"/>
</dbReference>
<dbReference type="RefSeq" id="WP_000896508.1">
    <property type="nucleotide sequence ID" value="NC_011274.1"/>
</dbReference>
<dbReference type="SMR" id="B5RFW2"/>
<dbReference type="KEGG" id="seg:SG3567"/>
<dbReference type="HOGENOM" id="CLU_050669_0_1_6"/>
<dbReference type="Proteomes" id="UP000008321">
    <property type="component" value="Chromosome"/>
</dbReference>
<dbReference type="GO" id="GO:0005886">
    <property type="term" value="C:plasma membrane"/>
    <property type="evidence" value="ECO:0007669"/>
    <property type="project" value="UniProtKB-SubCell"/>
</dbReference>
<dbReference type="GO" id="GO:0045259">
    <property type="term" value="C:proton-transporting ATP synthase complex"/>
    <property type="evidence" value="ECO:0007669"/>
    <property type="project" value="UniProtKB-KW"/>
</dbReference>
<dbReference type="GO" id="GO:0005524">
    <property type="term" value="F:ATP binding"/>
    <property type="evidence" value="ECO:0007669"/>
    <property type="project" value="UniProtKB-UniRule"/>
</dbReference>
<dbReference type="GO" id="GO:0046933">
    <property type="term" value="F:proton-transporting ATP synthase activity, rotational mechanism"/>
    <property type="evidence" value="ECO:0007669"/>
    <property type="project" value="UniProtKB-UniRule"/>
</dbReference>
<dbReference type="GO" id="GO:0042777">
    <property type="term" value="P:proton motive force-driven plasma membrane ATP synthesis"/>
    <property type="evidence" value="ECO:0007669"/>
    <property type="project" value="UniProtKB-UniRule"/>
</dbReference>
<dbReference type="CDD" id="cd12151">
    <property type="entry name" value="F1-ATPase_gamma"/>
    <property type="match status" value="1"/>
</dbReference>
<dbReference type="FunFam" id="1.10.287.80:FF:000005">
    <property type="entry name" value="ATP synthase gamma chain"/>
    <property type="match status" value="2"/>
</dbReference>
<dbReference type="FunFam" id="3.40.1380.10:FF:000001">
    <property type="entry name" value="ATP synthase gamma chain"/>
    <property type="match status" value="1"/>
</dbReference>
<dbReference type="Gene3D" id="3.40.1380.10">
    <property type="match status" value="1"/>
</dbReference>
<dbReference type="Gene3D" id="1.10.287.80">
    <property type="entry name" value="ATP synthase, gamma subunit, helix hairpin domain"/>
    <property type="match status" value="1"/>
</dbReference>
<dbReference type="HAMAP" id="MF_00815">
    <property type="entry name" value="ATP_synth_gamma_bact"/>
    <property type="match status" value="1"/>
</dbReference>
<dbReference type="InterPro" id="IPR035968">
    <property type="entry name" value="ATP_synth_F1_ATPase_gsu"/>
</dbReference>
<dbReference type="InterPro" id="IPR000131">
    <property type="entry name" value="ATP_synth_F1_gsu"/>
</dbReference>
<dbReference type="InterPro" id="IPR023632">
    <property type="entry name" value="ATP_synth_F1_gsu_CS"/>
</dbReference>
<dbReference type="NCBIfam" id="TIGR01146">
    <property type="entry name" value="ATPsyn_F1gamma"/>
    <property type="match status" value="1"/>
</dbReference>
<dbReference type="NCBIfam" id="NF004144">
    <property type="entry name" value="PRK05621.1-1"/>
    <property type="match status" value="1"/>
</dbReference>
<dbReference type="PANTHER" id="PTHR11693">
    <property type="entry name" value="ATP SYNTHASE GAMMA CHAIN"/>
    <property type="match status" value="1"/>
</dbReference>
<dbReference type="PANTHER" id="PTHR11693:SF22">
    <property type="entry name" value="ATP SYNTHASE SUBUNIT GAMMA, MITOCHONDRIAL"/>
    <property type="match status" value="1"/>
</dbReference>
<dbReference type="Pfam" id="PF00231">
    <property type="entry name" value="ATP-synt"/>
    <property type="match status" value="1"/>
</dbReference>
<dbReference type="PRINTS" id="PR00126">
    <property type="entry name" value="ATPASEGAMMA"/>
</dbReference>
<dbReference type="SUPFAM" id="SSF52943">
    <property type="entry name" value="ATP synthase (F1-ATPase), gamma subunit"/>
    <property type="match status" value="1"/>
</dbReference>
<dbReference type="PROSITE" id="PS00153">
    <property type="entry name" value="ATPASE_GAMMA"/>
    <property type="match status" value="1"/>
</dbReference>
<proteinExistence type="inferred from homology"/>
<accession>B5RFW2</accession>
<sequence>MAGAKEIRSKIASVQNTQKITKAMEMVAASKMRKSQDRMAASRPYAETMRKVIGHLANGNLEYKHPYLEERDVKRVGYLVVSTDRGLCGGLNINLFKKLLADMKAWSDKGVQCELAMIGSKGVSFFNSVGGNVVSQVTGMGDNPSLSELIGPVKVMLQAYDEGRLDKLYIVSNKFINTMSQVPTITQLLPLPASEDDDLKRKAWDYLYEPDPKALLDTLLRRYVESQVYQGVVENLASEQAARMVAMKAATDNGGSLIKELQLVYNKARQASITQELTEIVSGAAAV</sequence>
<gene>
    <name evidence="1" type="primary">atpG</name>
    <name type="ordered locus">SG3567</name>
</gene>
<reference key="1">
    <citation type="journal article" date="2008" name="Genome Res.">
        <title>Comparative genome analysis of Salmonella enteritidis PT4 and Salmonella gallinarum 287/91 provides insights into evolutionary and host adaptation pathways.</title>
        <authorList>
            <person name="Thomson N.R."/>
            <person name="Clayton D.J."/>
            <person name="Windhorst D."/>
            <person name="Vernikos G."/>
            <person name="Davidson S."/>
            <person name="Churcher C."/>
            <person name="Quail M.A."/>
            <person name="Stevens M."/>
            <person name="Jones M.A."/>
            <person name="Watson M."/>
            <person name="Barron A."/>
            <person name="Layton A."/>
            <person name="Pickard D."/>
            <person name="Kingsley R.A."/>
            <person name="Bignell A."/>
            <person name="Clark L."/>
            <person name="Harris B."/>
            <person name="Ormond D."/>
            <person name="Abdellah Z."/>
            <person name="Brooks K."/>
            <person name="Cherevach I."/>
            <person name="Chillingworth T."/>
            <person name="Woodward J."/>
            <person name="Norberczak H."/>
            <person name="Lord A."/>
            <person name="Arrowsmith C."/>
            <person name="Jagels K."/>
            <person name="Moule S."/>
            <person name="Mungall K."/>
            <person name="Saunders M."/>
            <person name="Whitehead S."/>
            <person name="Chabalgoity J.A."/>
            <person name="Maskell D."/>
            <person name="Humphreys T."/>
            <person name="Roberts M."/>
            <person name="Barrow P.A."/>
            <person name="Dougan G."/>
            <person name="Parkhill J."/>
        </authorList>
    </citation>
    <scope>NUCLEOTIDE SEQUENCE [LARGE SCALE GENOMIC DNA]</scope>
    <source>
        <strain>287/91 / NCTC 13346</strain>
    </source>
</reference>
<keyword id="KW-0066">ATP synthesis</keyword>
<keyword id="KW-0997">Cell inner membrane</keyword>
<keyword id="KW-1003">Cell membrane</keyword>
<keyword id="KW-0139">CF(1)</keyword>
<keyword id="KW-0375">Hydrogen ion transport</keyword>
<keyword id="KW-0406">Ion transport</keyword>
<keyword id="KW-0472">Membrane</keyword>
<keyword id="KW-0813">Transport</keyword>
<protein>
    <recommendedName>
        <fullName evidence="1">ATP synthase gamma chain</fullName>
    </recommendedName>
    <alternativeName>
        <fullName evidence="1">ATP synthase F1 sector gamma subunit</fullName>
    </alternativeName>
    <alternativeName>
        <fullName evidence="1">F-ATPase gamma subunit</fullName>
    </alternativeName>
</protein>
<comment type="function">
    <text evidence="1">Produces ATP from ADP in the presence of a proton gradient across the membrane. The gamma chain is believed to be important in regulating ATPase activity and the flow of protons through the CF(0) complex.</text>
</comment>
<comment type="subunit">
    <text evidence="1">F-type ATPases have 2 components, CF(1) - the catalytic core - and CF(0) - the membrane proton channel. CF(1) has five subunits: alpha(3), beta(3), gamma(1), delta(1), epsilon(1). CF(0) has three main subunits: a, b and c.</text>
</comment>
<comment type="subcellular location">
    <subcellularLocation>
        <location evidence="1">Cell inner membrane</location>
        <topology evidence="1">Peripheral membrane protein</topology>
    </subcellularLocation>
</comment>
<comment type="similarity">
    <text evidence="1">Belongs to the ATPase gamma chain family.</text>
</comment>
<organism>
    <name type="scientific">Salmonella gallinarum (strain 287/91 / NCTC 13346)</name>
    <dbReference type="NCBI Taxonomy" id="550538"/>
    <lineage>
        <taxon>Bacteria</taxon>
        <taxon>Pseudomonadati</taxon>
        <taxon>Pseudomonadota</taxon>
        <taxon>Gammaproteobacteria</taxon>
        <taxon>Enterobacterales</taxon>
        <taxon>Enterobacteriaceae</taxon>
        <taxon>Salmonella</taxon>
    </lineage>
</organism>
<name>ATPG_SALG2</name>